<comment type="function">
    <text evidence="1">Monomeric heme protein which primary function is to store oxygen and facilitate its diffusion within muscle tissues. Reversibly binds oxygen through a pentacoordinated heme iron and enables its timely and efficient release as needed during periods of heightened demand. Depending on the oxidative conditions of tissues and cells, and in addition to its ability to bind oxygen, it also has a nitrite reductase activity whereby it regulates the production of bioactive nitric oxide. Under stress conditions, like hypoxia and anoxia, it also protects cells against reactive oxygen species thanks to its pseudoperoxidase activity.</text>
</comment>
<comment type="catalytic activity">
    <reaction evidence="1">
        <text>Fe(III)-heme b-[protein] + nitric oxide + H2O = Fe(II)-heme b-[protein] + nitrite + 2 H(+)</text>
        <dbReference type="Rhea" id="RHEA:77711"/>
        <dbReference type="Rhea" id="RHEA-COMP:18975"/>
        <dbReference type="Rhea" id="RHEA-COMP:18976"/>
        <dbReference type="ChEBI" id="CHEBI:15377"/>
        <dbReference type="ChEBI" id="CHEBI:15378"/>
        <dbReference type="ChEBI" id="CHEBI:16301"/>
        <dbReference type="ChEBI" id="CHEBI:16480"/>
        <dbReference type="ChEBI" id="CHEBI:55376"/>
        <dbReference type="ChEBI" id="CHEBI:60344"/>
    </reaction>
    <physiologicalReaction direction="right-to-left" evidence="1">
        <dbReference type="Rhea" id="RHEA:77713"/>
    </physiologicalReaction>
</comment>
<comment type="catalytic activity">
    <reaction evidence="1">
        <text>H2O2 + AH2 = A + 2 H2O</text>
        <dbReference type="Rhea" id="RHEA:30275"/>
        <dbReference type="ChEBI" id="CHEBI:13193"/>
        <dbReference type="ChEBI" id="CHEBI:15377"/>
        <dbReference type="ChEBI" id="CHEBI:16240"/>
        <dbReference type="ChEBI" id="CHEBI:17499"/>
    </reaction>
</comment>
<comment type="subunit">
    <text evidence="2">Monomeric.</text>
</comment>
<comment type="subcellular location">
    <subcellularLocation>
        <location evidence="1">Cytoplasm</location>
        <location evidence="1">Sarcoplasm</location>
    </subcellularLocation>
</comment>
<comment type="miscellaneous">
    <text>Some amides were assigned by electrophoretic mobility or by homology.</text>
</comment>
<comment type="similarity">
    <text evidence="7">Belongs to the globin family.</text>
</comment>
<gene>
    <name type="primary">MB</name>
</gene>
<dbReference type="EC" id="1.7.-.-" evidence="1"/>
<dbReference type="EC" id="1.11.1.-" evidence="1"/>
<dbReference type="PIR" id="A02490">
    <property type="entry name" value="MYGC"/>
</dbReference>
<dbReference type="SMR" id="P02168"/>
<dbReference type="GO" id="GO:0070062">
    <property type="term" value="C:extracellular exosome"/>
    <property type="evidence" value="ECO:0007669"/>
    <property type="project" value="TreeGrafter"/>
</dbReference>
<dbReference type="GO" id="GO:0016528">
    <property type="term" value="C:sarcoplasm"/>
    <property type="evidence" value="ECO:0000250"/>
    <property type="project" value="UniProtKB"/>
</dbReference>
<dbReference type="GO" id="GO:0020037">
    <property type="term" value="F:heme binding"/>
    <property type="evidence" value="ECO:0007669"/>
    <property type="project" value="InterPro"/>
</dbReference>
<dbReference type="GO" id="GO:0046872">
    <property type="term" value="F:metal ion binding"/>
    <property type="evidence" value="ECO:0007669"/>
    <property type="project" value="UniProtKB-KW"/>
</dbReference>
<dbReference type="GO" id="GO:0098809">
    <property type="term" value="F:nitrite reductase activity"/>
    <property type="evidence" value="ECO:0000250"/>
    <property type="project" value="UniProtKB"/>
</dbReference>
<dbReference type="GO" id="GO:0019825">
    <property type="term" value="F:oxygen binding"/>
    <property type="evidence" value="ECO:0007669"/>
    <property type="project" value="InterPro"/>
</dbReference>
<dbReference type="GO" id="GO:0005344">
    <property type="term" value="F:oxygen carrier activity"/>
    <property type="evidence" value="ECO:0000250"/>
    <property type="project" value="UniProtKB"/>
</dbReference>
<dbReference type="GO" id="GO:0004601">
    <property type="term" value="F:peroxidase activity"/>
    <property type="evidence" value="ECO:0000250"/>
    <property type="project" value="UniProtKB"/>
</dbReference>
<dbReference type="GO" id="GO:0019430">
    <property type="term" value="P:removal of superoxide radicals"/>
    <property type="evidence" value="ECO:0000250"/>
    <property type="project" value="UniProtKB"/>
</dbReference>
<dbReference type="Gene3D" id="6.10.140.2100">
    <property type="match status" value="1"/>
</dbReference>
<dbReference type="Gene3D" id="6.10.140.2110">
    <property type="match status" value="1"/>
</dbReference>
<dbReference type="InterPro" id="IPR000971">
    <property type="entry name" value="Globin"/>
</dbReference>
<dbReference type="InterPro" id="IPR009050">
    <property type="entry name" value="Globin-like_sf"/>
</dbReference>
<dbReference type="InterPro" id="IPR002335">
    <property type="entry name" value="Myoglobin"/>
</dbReference>
<dbReference type="PANTHER" id="PTHR47132">
    <property type="entry name" value="MYOGLOBIN"/>
    <property type="match status" value="1"/>
</dbReference>
<dbReference type="PANTHER" id="PTHR47132:SF1">
    <property type="entry name" value="MYOGLOBIN"/>
    <property type="match status" value="1"/>
</dbReference>
<dbReference type="Pfam" id="PF00042">
    <property type="entry name" value="Globin"/>
    <property type="match status" value="1"/>
</dbReference>
<dbReference type="PRINTS" id="PR00613">
    <property type="entry name" value="MYOGLOBIN"/>
</dbReference>
<dbReference type="SUPFAM" id="SSF46458">
    <property type="entry name" value="Globin-like"/>
    <property type="match status" value="1"/>
</dbReference>
<dbReference type="PROSITE" id="PS01033">
    <property type="entry name" value="GLOBIN"/>
    <property type="match status" value="1"/>
</dbReference>
<evidence type="ECO:0000250" key="1">
    <source>
        <dbReference type="UniProtKB" id="P02144"/>
    </source>
</evidence>
<evidence type="ECO:0000250" key="2">
    <source>
        <dbReference type="UniProtKB" id="P02185"/>
    </source>
</evidence>
<evidence type="ECO:0000250" key="3">
    <source>
        <dbReference type="UniProtKB" id="P02189"/>
    </source>
</evidence>
<evidence type="ECO:0000250" key="4">
    <source>
        <dbReference type="UniProtKB" id="P04247"/>
    </source>
</evidence>
<evidence type="ECO:0000250" key="5">
    <source>
        <dbReference type="UniProtKB" id="P68082"/>
    </source>
</evidence>
<evidence type="ECO:0000250" key="6">
    <source>
        <dbReference type="UniProtKB" id="Q9QZ76"/>
    </source>
</evidence>
<evidence type="ECO:0000255" key="7">
    <source>
        <dbReference type="PROSITE-ProRule" id="PRU00238"/>
    </source>
</evidence>
<name>MYG_OTOCR</name>
<accession>P02168</accession>
<keyword id="KW-0963">Cytoplasm</keyword>
<keyword id="KW-0903">Direct protein sequencing</keyword>
<keyword id="KW-0349">Heme</keyword>
<keyword id="KW-0408">Iron</keyword>
<keyword id="KW-0479">Metal-binding</keyword>
<keyword id="KW-0514">Muscle protein</keyword>
<keyword id="KW-0560">Oxidoreductase</keyword>
<keyword id="KW-0561">Oxygen transport</keyword>
<keyword id="KW-0597">Phosphoprotein</keyword>
<keyword id="KW-0813">Transport</keyword>
<sequence>MGLSDGEWQLVLKIWGKVEADLAGHGQDVLIRLFTAHPETLEKFDKFKNLKTADEMKASEDLKKHGVTVLTALGGILKKKGQHEAEIKPLAQSHATKHKIPVKYLEFISEAIIHVLQNKHSGDFGTDVQGAMSKALELFRNDIAAKYKELGFQG</sequence>
<organism>
    <name type="scientific">Otolemur crassicaudatus</name>
    <name type="common">Brown greater galago</name>
    <name type="synonym">Galago crassicaudatus</name>
    <dbReference type="NCBI Taxonomy" id="9463"/>
    <lineage>
        <taxon>Eukaryota</taxon>
        <taxon>Metazoa</taxon>
        <taxon>Chordata</taxon>
        <taxon>Craniata</taxon>
        <taxon>Vertebrata</taxon>
        <taxon>Euteleostomi</taxon>
        <taxon>Mammalia</taxon>
        <taxon>Eutheria</taxon>
        <taxon>Euarchontoglires</taxon>
        <taxon>Primates</taxon>
        <taxon>Strepsirrhini</taxon>
        <taxon>Lorisiformes</taxon>
        <taxon>Galagidae</taxon>
        <taxon>Otolemur</taxon>
    </lineage>
</organism>
<reference key="1">
    <citation type="journal article" date="1973" name="Biochim. Biophys. Acta">
        <title>The myoglobin of primates. V. Prosimians: Galago crassicaudatus (thick-tailed galago) and Lepilemur mustelinus (sportive lemur).</title>
        <authorList>
            <person name="Romero-Herrera A.E."/>
            <person name="Lehmann H."/>
        </authorList>
    </citation>
    <scope>PARTIAL PROTEIN SEQUENCE</scope>
</reference>
<feature type="chain" id="PRO_0000053296" description="Myoglobin">
    <location>
        <begin position="1"/>
        <end position="154"/>
    </location>
</feature>
<feature type="domain" description="Globin" evidence="7">
    <location>
        <begin position="2"/>
        <end position="148"/>
    </location>
</feature>
<feature type="binding site" evidence="5">
    <location>
        <position position="65"/>
    </location>
    <ligand>
        <name>nitrite</name>
        <dbReference type="ChEBI" id="CHEBI:16301"/>
    </ligand>
</feature>
<feature type="binding site" evidence="3 7">
    <location>
        <position position="65"/>
    </location>
    <ligand>
        <name>O2</name>
        <dbReference type="ChEBI" id="CHEBI:15379"/>
    </ligand>
</feature>
<feature type="binding site" description="proximal binding residue" evidence="1">
    <location>
        <position position="94"/>
    </location>
    <ligand>
        <name>heme b</name>
        <dbReference type="ChEBI" id="CHEBI:60344"/>
    </ligand>
    <ligandPart>
        <name>Fe</name>
        <dbReference type="ChEBI" id="CHEBI:18248"/>
    </ligandPart>
</feature>
<feature type="modified residue" description="Phosphoserine" evidence="6">
    <location>
        <position position="4"/>
    </location>
</feature>
<feature type="modified residue" description="Phosphothreonine" evidence="4">
    <location>
        <position position="68"/>
    </location>
</feature>
<proteinExistence type="evidence at protein level"/>
<protein>
    <recommendedName>
        <fullName>Myoglobin</fullName>
    </recommendedName>
    <alternativeName>
        <fullName evidence="1">Nitrite reductase MB</fullName>
        <ecNumber evidence="1">1.7.-.-</ecNumber>
    </alternativeName>
    <alternativeName>
        <fullName evidence="1">Pseudoperoxidase MB</fullName>
        <ecNumber evidence="1">1.11.1.-</ecNumber>
    </alternativeName>
</protein>